<feature type="chain" id="PRO_1000045998" description="Ribosomal protein L11 methyltransferase">
    <location>
        <begin position="1"/>
        <end position="300"/>
    </location>
</feature>
<feature type="binding site" evidence="1">
    <location>
        <position position="152"/>
    </location>
    <ligand>
        <name>S-adenosyl-L-methionine</name>
        <dbReference type="ChEBI" id="CHEBI:59789"/>
    </ligand>
</feature>
<feature type="binding site" evidence="1">
    <location>
        <position position="173"/>
    </location>
    <ligand>
        <name>S-adenosyl-L-methionine</name>
        <dbReference type="ChEBI" id="CHEBI:59789"/>
    </ligand>
</feature>
<feature type="binding site" evidence="1">
    <location>
        <position position="195"/>
    </location>
    <ligand>
        <name>S-adenosyl-L-methionine</name>
        <dbReference type="ChEBI" id="CHEBI:59789"/>
    </ligand>
</feature>
<feature type="binding site" evidence="1">
    <location>
        <position position="234"/>
    </location>
    <ligand>
        <name>S-adenosyl-L-methionine</name>
        <dbReference type="ChEBI" id="CHEBI:59789"/>
    </ligand>
</feature>
<reference key="1">
    <citation type="submission" date="2005-10" db="EMBL/GenBank/DDBJ databases">
        <title>Complete sequence of chromosome 1 of Burkholderia sp. 383.</title>
        <authorList>
            <consortium name="US DOE Joint Genome Institute"/>
            <person name="Copeland A."/>
            <person name="Lucas S."/>
            <person name="Lapidus A."/>
            <person name="Barry K."/>
            <person name="Detter J.C."/>
            <person name="Glavina T."/>
            <person name="Hammon N."/>
            <person name="Israni S."/>
            <person name="Pitluck S."/>
            <person name="Chain P."/>
            <person name="Malfatti S."/>
            <person name="Shin M."/>
            <person name="Vergez L."/>
            <person name="Schmutz J."/>
            <person name="Larimer F."/>
            <person name="Land M."/>
            <person name="Kyrpides N."/>
            <person name="Lykidis A."/>
            <person name="Richardson P."/>
        </authorList>
    </citation>
    <scope>NUCLEOTIDE SEQUENCE [LARGE SCALE GENOMIC DNA]</scope>
    <source>
        <strain>ATCC 17760 / DSM 23089 / LMG 22485 / NCIMB 9086 / R18194 / 383</strain>
    </source>
</reference>
<gene>
    <name evidence="1" type="primary">prmA</name>
    <name type="ordered locus">Bcep18194_A3686</name>
</gene>
<keyword id="KW-0963">Cytoplasm</keyword>
<keyword id="KW-0489">Methyltransferase</keyword>
<keyword id="KW-0949">S-adenosyl-L-methionine</keyword>
<keyword id="KW-0808">Transferase</keyword>
<proteinExistence type="inferred from homology"/>
<evidence type="ECO:0000255" key="1">
    <source>
        <dbReference type="HAMAP-Rule" id="MF_00735"/>
    </source>
</evidence>
<protein>
    <recommendedName>
        <fullName evidence="1">Ribosomal protein L11 methyltransferase</fullName>
        <shortName evidence="1">L11 Mtase</shortName>
        <ecNumber evidence="1">2.1.1.-</ecNumber>
    </recommendedName>
</protein>
<dbReference type="EC" id="2.1.1.-" evidence="1"/>
<dbReference type="EMBL" id="CP000151">
    <property type="protein sequence ID" value="ABB07287.1"/>
    <property type="molecule type" value="Genomic_DNA"/>
</dbReference>
<dbReference type="RefSeq" id="WP_011350877.1">
    <property type="nucleotide sequence ID" value="NC_007510.1"/>
</dbReference>
<dbReference type="SMR" id="Q39JS9"/>
<dbReference type="GeneID" id="45093600"/>
<dbReference type="KEGG" id="bur:Bcep18194_A3686"/>
<dbReference type="PATRIC" id="fig|482957.22.peg.543"/>
<dbReference type="HOGENOM" id="CLU_049382_4_1_4"/>
<dbReference type="Proteomes" id="UP000002705">
    <property type="component" value="Chromosome 1"/>
</dbReference>
<dbReference type="GO" id="GO:0005829">
    <property type="term" value="C:cytosol"/>
    <property type="evidence" value="ECO:0007669"/>
    <property type="project" value="TreeGrafter"/>
</dbReference>
<dbReference type="GO" id="GO:0016279">
    <property type="term" value="F:protein-lysine N-methyltransferase activity"/>
    <property type="evidence" value="ECO:0007669"/>
    <property type="project" value="TreeGrafter"/>
</dbReference>
<dbReference type="GO" id="GO:0032259">
    <property type="term" value="P:methylation"/>
    <property type="evidence" value="ECO:0007669"/>
    <property type="project" value="UniProtKB-KW"/>
</dbReference>
<dbReference type="CDD" id="cd02440">
    <property type="entry name" value="AdoMet_MTases"/>
    <property type="match status" value="1"/>
</dbReference>
<dbReference type="Gene3D" id="3.40.50.150">
    <property type="entry name" value="Vaccinia Virus protein VP39"/>
    <property type="match status" value="1"/>
</dbReference>
<dbReference type="HAMAP" id="MF_00735">
    <property type="entry name" value="Methyltr_PrmA"/>
    <property type="match status" value="1"/>
</dbReference>
<dbReference type="InterPro" id="IPR050078">
    <property type="entry name" value="Ribosomal_L11_MeTrfase_PrmA"/>
</dbReference>
<dbReference type="InterPro" id="IPR004498">
    <property type="entry name" value="Ribosomal_PrmA_MeTrfase"/>
</dbReference>
<dbReference type="InterPro" id="IPR029063">
    <property type="entry name" value="SAM-dependent_MTases_sf"/>
</dbReference>
<dbReference type="NCBIfam" id="TIGR00406">
    <property type="entry name" value="prmA"/>
    <property type="match status" value="1"/>
</dbReference>
<dbReference type="PANTHER" id="PTHR43648">
    <property type="entry name" value="ELECTRON TRANSFER FLAVOPROTEIN BETA SUBUNIT LYSINE METHYLTRANSFERASE"/>
    <property type="match status" value="1"/>
</dbReference>
<dbReference type="PANTHER" id="PTHR43648:SF1">
    <property type="entry name" value="ELECTRON TRANSFER FLAVOPROTEIN BETA SUBUNIT LYSINE METHYLTRANSFERASE"/>
    <property type="match status" value="1"/>
</dbReference>
<dbReference type="Pfam" id="PF06325">
    <property type="entry name" value="PrmA"/>
    <property type="match status" value="1"/>
</dbReference>
<dbReference type="PIRSF" id="PIRSF000401">
    <property type="entry name" value="RPL11_MTase"/>
    <property type="match status" value="1"/>
</dbReference>
<dbReference type="SUPFAM" id="SSF53335">
    <property type="entry name" value="S-adenosyl-L-methionine-dependent methyltransferases"/>
    <property type="match status" value="1"/>
</dbReference>
<comment type="function">
    <text evidence="1">Methylates ribosomal protein L11.</text>
</comment>
<comment type="catalytic activity">
    <reaction evidence="1">
        <text>L-lysyl-[protein] + 3 S-adenosyl-L-methionine = N(6),N(6),N(6)-trimethyl-L-lysyl-[protein] + 3 S-adenosyl-L-homocysteine + 3 H(+)</text>
        <dbReference type="Rhea" id="RHEA:54192"/>
        <dbReference type="Rhea" id="RHEA-COMP:9752"/>
        <dbReference type="Rhea" id="RHEA-COMP:13826"/>
        <dbReference type="ChEBI" id="CHEBI:15378"/>
        <dbReference type="ChEBI" id="CHEBI:29969"/>
        <dbReference type="ChEBI" id="CHEBI:57856"/>
        <dbReference type="ChEBI" id="CHEBI:59789"/>
        <dbReference type="ChEBI" id="CHEBI:61961"/>
    </reaction>
</comment>
<comment type="subcellular location">
    <subcellularLocation>
        <location evidence="1">Cytoplasm</location>
    </subcellularLocation>
</comment>
<comment type="similarity">
    <text evidence="1">Belongs to the methyltransferase superfamily. PrmA family.</text>
</comment>
<name>PRMA_BURL3</name>
<organism>
    <name type="scientific">Burkholderia lata (strain ATCC 17760 / DSM 23089 / LMG 22485 / NCIMB 9086 / R18194 / 383)</name>
    <dbReference type="NCBI Taxonomy" id="482957"/>
    <lineage>
        <taxon>Bacteria</taxon>
        <taxon>Pseudomonadati</taxon>
        <taxon>Pseudomonadota</taxon>
        <taxon>Betaproteobacteria</taxon>
        <taxon>Burkholderiales</taxon>
        <taxon>Burkholderiaceae</taxon>
        <taxon>Burkholderia</taxon>
        <taxon>Burkholderia cepacia complex</taxon>
    </lineage>
</organism>
<accession>Q39JS9</accession>
<sequence>MSYRELVVELAREHAEALSDALLELGALSVSVEDADADTPDEQPLFGEPGLVPDRTAWQHSRVVALLAADHEPAVLLAAAANEIGVAETPAFTVREVEEQDWVRLTQSQFEPIPIGERIWVVPSWHDAPDPDALILELDPGLAFGTGSHPTTRLCMEWLEQSVKPGQSVLDYGCGSGILAILAKKCGANPVIGIDIDPQAVESARQNSERNHADVTYGLPDACPDGEFDIVVANILSNPLKLMASMLASKVKPGGRIALSGVLARQADEVAAVYARYVDISVWREHEGWVCLAGTRRESH</sequence>